<evidence type="ECO:0000255" key="1">
    <source>
        <dbReference type="HAMAP-Rule" id="MF_00375"/>
    </source>
</evidence>
<comment type="catalytic activity">
    <reaction evidence="1">
        <text>(S)-4-amino-5-oxopentanoate = 5-aminolevulinate</text>
        <dbReference type="Rhea" id="RHEA:14265"/>
        <dbReference type="ChEBI" id="CHEBI:57501"/>
        <dbReference type="ChEBI" id="CHEBI:356416"/>
        <dbReference type="EC" id="5.4.3.8"/>
    </reaction>
</comment>
<comment type="cofactor">
    <cofactor evidence="1">
        <name>pyridoxal 5'-phosphate</name>
        <dbReference type="ChEBI" id="CHEBI:597326"/>
    </cofactor>
</comment>
<comment type="pathway">
    <text evidence="1">Porphyrin-containing compound metabolism; protoporphyrin-IX biosynthesis; 5-aminolevulinate from L-glutamyl-tRNA(Glu): step 2/2.</text>
</comment>
<comment type="subunit">
    <text evidence="1">Homodimer.</text>
</comment>
<comment type="subcellular location">
    <subcellularLocation>
        <location evidence="1">Cytoplasm</location>
    </subcellularLocation>
</comment>
<comment type="similarity">
    <text evidence="1">Belongs to the class-III pyridoxal-phosphate-dependent aminotransferase family. HemL subfamily.</text>
</comment>
<organism>
    <name type="scientific">Staphylococcus aureus (strain bovine RF122 / ET3-1)</name>
    <dbReference type="NCBI Taxonomy" id="273036"/>
    <lineage>
        <taxon>Bacteria</taxon>
        <taxon>Bacillati</taxon>
        <taxon>Bacillota</taxon>
        <taxon>Bacilli</taxon>
        <taxon>Bacillales</taxon>
        <taxon>Staphylococcaceae</taxon>
        <taxon>Staphylococcus</taxon>
    </lineage>
</organism>
<feature type="chain" id="PRO_0000243619" description="Glutamate-1-semialdehyde 2,1-aminomutase 1">
    <location>
        <begin position="1"/>
        <end position="428"/>
    </location>
</feature>
<feature type="modified residue" description="N6-(pyridoxal phosphate)lysine" evidence="1">
    <location>
        <position position="267"/>
    </location>
</feature>
<name>GSA1_STAAB</name>
<accession>Q2YTC2</accession>
<keyword id="KW-0963">Cytoplasm</keyword>
<keyword id="KW-0413">Isomerase</keyword>
<keyword id="KW-0627">Porphyrin biosynthesis</keyword>
<keyword id="KW-0663">Pyridoxal phosphate</keyword>
<dbReference type="EC" id="5.4.3.8" evidence="1"/>
<dbReference type="EMBL" id="AJ938182">
    <property type="protein sequence ID" value="CAI81216.1"/>
    <property type="molecule type" value="Genomic_DNA"/>
</dbReference>
<dbReference type="RefSeq" id="WP_001270857.1">
    <property type="nucleotide sequence ID" value="NC_007622.1"/>
</dbReference>
<dbReference type="SMR" id="Q2YTC2"/>
<dbReference type="KEGG" id="sab:SAB1527c"/>
<dbReference type="HOGENOM" id="CLU_016922_1_5_9"/>
<dbReference type="UniPathway" id="UPA00251">
    <property type="reaction ID" value="UER00317"/>
</dbReference>
<dbReference type="GO" id="GO:0005737">
    <property type="term" value="C:cytoplasm"/>
    <property type="evidence" value="ECO:0007669"/>
    <property type="project" value="UniProtKB-SubCell"/>
</dbReference>
<dbReference type="GO" id="GO:0042286">
    <property type="term" value="F:glutamate-1-semialdehyde 2,1-aminomutase activity"/>
    <property type="evidence" value="ECO:0007669"/>
    <property type="project" value="UniProtKB-UniRule"/>
</dbReference>
<dbReference type="GO" id="GO:0030170">
    <property type="term" value="F:pyridoxal phosphate binding"/>
    <property type="evidence" value="ECO:0007669"/>
    <property type="project" value="InterPro"/>
</dbReference>
<dbReference type="GO" id="GO:0008483">
    <property type="term" value="F:transaminase activity"/>
    <property type="evidence" value="ECO:0007669"/>
    <property type="project" value="InterPro"/>
</dbReference>
<dbReference type="GO" id="GO:0006782">
    <property type="term" value="P:protoporphyrinogen IX biosynthetic process"/>
    <property type="evidence" value="ECO:0007669"/>
    <property type="project" value="UniProtKB-UniRule"/>
</dbReference>
<dbReference type="CDD" id="cd00610">
    <property type="entry name" value="OAT_like"/>
    <property type="match status" value="1"/>
</dbReference>
<dbReference type="FunFam" id="3.40.640.10:FF:000021">
    <property type="entry name" value="Glutamate-1-semialdehyde 2,1-aminomutase"/>
    <property type="match status" value="1"/>
</dbReference>
<dbReference type="Gene3D" id="3.90.1150.10">
    <property type="entry name" value="Aspartate Aminotransferase, domain 1"/>
    <property type="match status" value="1"/>
</dbReference>
<dbReference type="Gene3D" id="3.40.640.10">
    <property type="entry name" value="Type I PLP-dependent aspartate aminotransferase-like (Major domain)"/>
    <property type="match status" value="1"/>
</dbReference>
<dbReference type="HAMAP" id="MF_00375">
    <property type="entry name" value="HemL_aminotrans_3"/>
    <property type="match status" value="1"/>
</dbReference>
<dbReference type="InterPro" id="IPR004639">
    <property type="entry name" value="4pyrrol_synth_GluAld_NH2Trfase"/>
</dbReference>
<dbReference type="InterPro" id="IPR005814">
    <property type="entry name" value="Aminotrans_3"/>
</dbReference>
<dbReference type="InterPro" id="IPR049704">
    <property type="entry name" value="Aminotrans_3_PPA_site"/>
</dbReference>
<dbReference type="InterPro" id="IPR015424">
    <property type="entry name" value="PyrdxlP-dep_Trfase"/>
</dbReference>
<dbReference type="InterPro" id="IPR015421">
    <property type="entry name" value="PyrdxlP-dep_Trfase_major"/>
</dbReference>
<dbReference type="InterPro" id="IPR015422">
    <property type="entry name" value="PyrdxlP-dep_Trfase_small"/>
</dbReference>
<dbReference type="NCBIfam" id="TIGR00713">
    <property type="entry name" value="hemL"/>
    <property type="match status" value="1"/>
</dbReference>
<dbReference type="NCBIfam" id="NF000818">
    <property type="entry name" value="PRK00062.1"/>
    <property type="match status" value="1"/>
</dbReference>
<dbReference type="PANTHER" id="PTHR43713">
    <property type="entry name" value="GLUTAMATE-1-SEMIALDEHYDE 2,1-AMINOMUTASE"/>
    <property type="match status" value="1"/>
</dbReference>
<dbReference type="PANTHER" id="PTHR43713:SF3">
    <property type="entry name" value="GLUTAMATE-1-SEMIALDEHYDE 2,1-AMINOMUTASE 1, CHLOROPLASTIC-RELATED"/>
    <property type="match status" value="1"/>
</dbReference>
<dbReference type="Pfam" id="PF00202">
    <property type="entry name" value="Aminotran_3"/>
    <property type="match status" value="1"/>
</dbReference>
<dbReference type="SUPFAM" id="SSF53383">
    <property type="entry name" value="PLP-dependent transferases"/>
    <property type="match status" value="1"/>
</dbReference>
<dbReference type="PROSITE" id="PS00600">
    <property type="entry name" value="AA_TRANSFER_CLASS_3"/>
    <property type="match status" value="1"/>
</dbReference>
<reference key="1">
    <citation type="journal article" date="2007" name="PLoS ONE">
        <title>Molecular correlates of host specialization in Staphylococcus aureus.</title>
        <authorList>
            <person name="Herron-Olson L."/>
            <person name="Fitzgerald J.R."/>
            <person name="Musser J.M."/>
            <person name="Kapur V."/>
        </authorList>
    </citation>
    <scope>NUCLEOTIDE SEQUENCE [LARGE SCALE GENOMIC DNA]</scope>
    <source>
        <strain>bovine RF122 / ET3-1</strain>
    </source>
</reference>
<gene>
    <name evidence="1" type="primary">hemL1</name>
    <name type="ordered locus">SAB1527c</name>
</gene>
<protein>
    <recommendedName>
        <fullName evidence="1">Glutamate-1-semialdehyde 2,1-aminomutase 1</fullName>
        <shortName evidence="1">GSA 1</shortName>
        <ecNumber evidence="1">5.4.3.8</ecNumber>
    </recommendedName>
    <alternativeName>
        <fullName evidence="1">Glutamate-1-semialdehyde aminotransferase 1</fullName>
        <shortName evidence="1">GSA-AT 1</shortName>
    </alternativeName>
</protein>
<sequence length="428" mass="46364">MRYTKSEEAMKVAETLMPGGVNSPVRAFKSVDTPAIFMDHGKGSKIYDIDGNEYIDYVLSWGPLILGHRDPQVISHLHEAIDKGTSFGASTLLENKLAQLVIDRVPSIEKVRMVSSGTEATLDTLRLARGYTGRNKIVKFEGCYHGHSDSLLIKAGSGVATLGLPDSPGVPEGIAKNTITVPYNDLDALKIAFEKFGDDIAGVIVEPVAGNMGVIPPIEGFLQGLRDITTEYGALLIFDEVMTGFRVGYHCAQGYFGVTPDLTCLGKVIGGGLPVGAFGGKKEIMDQIAPLGNIYQAGTLSGNPLAMTSGYETLSQLAPETYEYFNMLGDILEDGLKRVFAKHNVPITVNRAGSMIGYFLNEGPVTNFEQANKSDLKLFAEMYREMAKEGVFLPPSQFEGTFLSTAHTKEDIEKTIQAFDTALSRIVK</sequence>
<proteinExistence type="inferred from homology"/>